<feature type="chain" id="PRO_0000052419" description="Flavohemoprotein">
    <location>
        <begin position="1"/>
        <end position="402"/>
    </location>
</feature>
<feature type="domain" description="Globin" evidence="2">
    <location>
        <begin position="1"/>
        <end position="136"/>
    </location>
</feature>
<feature type="domain" description="FAD-binding FR-type" evidence="1">
    <location>
        <begin position="150"/>
        <end position="260"/>
    </location>
</feature>
<feature type="region of interest" description="Reductase">
    <location>
        <begin position="147"/>
        <end position="402"/>
    </location>
</feature>
<feature type="active site" description="Charge relay system" evidence="1">
    <location>
        <position position="95"/>
    </location>
</feature>
<feature type="active site" description="Charge relay system" evidence="1">
    <location>
        <position position="135"/>
    </location>
</feature>
<feature type="binding site" description="proximal binding residue" evidence="1">
    <location>
        <position position="85"/>
    </location>
    <ligand>
        <name>heme b</name>
        <dbReference type="ChEBI" id="CHEBI:60344"/>
    </ligand>
    <ligandPart>
        <name>Fe</name>
        <dbReference type="ChEBI" id="CHEBI:18248"/>
    </ligandPart>
</feature>
<feature type="binding site" evidence="1">
    <location>
        <position position="188"/>
    </location>
    <ligand>
        <name>FAD</name>
        <dbReference type="ChEBI" id="CHEBI:57692"/>
    </ligand>
</feature>
<feature type="binding site" evidence="1">
    <location>
        <begin position="204"/>
        <end position="207"/>
    </location>
    <ligand>
        <name>FAD</name>
        <dbReference type="ChEBI" id="CHEBI:57692"/>
    </ligand>
</feature>
<feature type="binding site" evidence="1">
    <location>
        <begin position="273"/>
        <end position="278"/>
    </location>
    <ligand>
        <name>NADP(+)</name>
        <dbReference type="ChEBI" id="CHEBI:58349"/>
    </ligand>
</feature>
<feature type="binding site" evidence="1">
    <location>
        <begin position="394"/>
        <end position="397"/>
    </location>
    <ligand>
        <name>FAD</name>
        <dbReference type="ChEBI" id="CHEBI:57692"/>
    </ligand>
</feature>
<feature type="site" description="Involved in heme-bound ligand stabilization and O-O bond activation" evidence="1">
    <location>
        <position position="29"/>
    </location>
</feature>
<feature type="site" description="Influences the redox potential of the prosthetic heme and FAD groups" evidence="1">
    <location>
        <position position="84"/>
    </location>
</feature>
<feature type="site" description="Influences the redox potential of the prosthetic heme and FAD groups" evidence="1">
    <location>
        <position position="393"/>
    </location>
</feature>
<protein>
    <recommendedName>
        <fullName evidence="1">Flavohemoprotein</fullName>
    </recommendedName>
    <alternativeName>
        <fullName evidence="1">Flavohemoglobin</fullName>
    </alternativeName>
    <alternativeName>
        <fullName evidence="1">Hemoglobin-like protein</fullName>
    </alternativeName>
    <alternativeName>
        <fullName evidence="1">Nitric oxide dioxygenase</fullName>
        <shortName evidence="1">NO oxygenase</shortName>
        <shortName evidence="1">NOD</shortName>
        <ecNumber evidence="1">1.14.12.17</ecNumber>
    </alternativeName>
</protein>
<accession>Q81T23</accession>
<accession>Q6I1A5</accession>
<accession>Q6KV53</accession>
<reference key="1">
    <citation type="journal article" date="2003" name="Nature">
        <title>The genome sequence of Bacillus anthracis Ames and comparison to closely related bacteria.</title>
        <authorList>
            <person name="Read T.D."/>
            <person name="Peterson S.N."/>
            <person name="Tourasse N.J."/>
            <person name="Baillie L.W."/>
            <person name="Paulsen I.T."/>
            <person name="Nelson K.E."/>
            <person name="Tettelin H."/>
            <person name="Fouts D.E."/>
            <person name="Eisen J.A."/>
            <person name="Gill S.R."/>
            <person name="Holtzapple E.K."/>
            <person name="Okstad O.A."/>
            <person name="Helgason E."/>
            <person name="Rilstone J."/>
            <person name="Wu M."/>
            <person name="Kolonay J.F."/>
            <person name="Beanan M.J."/>
            <person name="Dodson R.J."/>
            <person name="Brinkac L.M."/>
            <person name="Gwinn M.L."/>
            <person name="DeBoy R.T."/>
            <person name="Madpu R."/>
            <person name="Daugherty S.C."/>
            <person name="Durkin A.S."/>
            <person name="Haft D.H."/>
            <person name="Nelson W.C."/>
            <person name="Peterson J.D."/>
            <person name="Pop M."/>
            <person name="Khouri H.M."/>
            <person name="Radune D."/>
            <person name="Benton J.L."/>
            <person name="Mahamoud Y."/>
            <person name="Jiang L."/>
            <person name="Hance I.R."/>
            <person name="Weidman J.F."/>
            <person name="Berry K.J."/>
            <person name="Plaut R.D."/>
            <person name="Wolf A.M."/>
            <person name="Watkins K.L."/>
            <person name="Nierman W.C."/>
            <person name="Hazen A."/>
            <person name="Cline R.T."/>
            <person name="Redmond C."/>
            <person name="Thwaite J.E."/>
            <person name="White O."/>
            <person name="Salzberg S.L."/>
            <person name="Thomason B."/>
            <person name="Friedlander A.M."/>
            <person name="Koehler T.M."/>
            <person name="Hanna P.C."/>
            <person name="Kolstoe A.-B."/>
            <person name="Fraser C.M."/>
        </authorList>
    </citation>
    <scope>NUCLEOTIDE SEQUENCE [LARGE SCALE GENOMIC DNA]</scope>
    <source>
        <strain>Ames / isolate Porton</strain>
    </source>
</reference>
<reference key="2">
    <citation type="journal article" date="2009" name="J. Bacteriol.">
        <title>The complete genome sequence of Bacillus anthracis Ames 'Ancestor'.</title>
        <authorList>
            <person name="Ravel J."/>
            <person name="Jiang L."/>
            <person name="Stanley S.T."/>
            <person name="Wilson M.R."/>
            <person name="Decker R.S."/>
            <person name="Read T.D."/>
            <person name="Worsham P."/>
            <person name="Keim P.S."/>
            <person name="Salzberg S.L."/>
            <person name="Fraser-Liggett C.M."/>
            <person name="Rasko D.A."/>
        </authorList>
    </citation>
    <scope>NUCLEOTIDE SEQUENCE [LARGE SCALE GENOMIC DNA]</scope>
    <source>
        <strain>Ames ancestor</strain>
    </source>
</reference>
<reference key="3">
    <citation type="submission" date="2004-01" db="EMBL/GenBank/DDBJ databases">
        <title>Complete genome sequence of Bacillus anthracis Sterne.</title>
        <authorList>
            <person name="Brettin T.S."/>
            <person name="Bruce D."/>
            <person name="Challacombe J.F."/>
            <person name="Gilna P."/>
            <person name="Han C."/>
            <person name="Hill K."/>
            <person name="Hitchcock P."/>
            <person name="Jackson P."/>
            <person name="Keim P."/>
            <person name="Longmire J."/>
            <person name="Lucas S."/>
            <person name="Okinaka R."/>
            <person name="Richardson P."/>
            <person name="Rubin E."/>
            <person name="Tice H."/>
        </authorList>
    </citation>
    <scope>NUCLEOTIDE SEQUENCE [LARGE SCALE GENOMIC DNA]</scope>
    <source>
        <strain>Sterne</strain>
    </source>
</reference>
<evidence type="ECO:0000255" key="1">
    <source>
        <dbReference type="HAMAP-Rule" id="MF_01252"/>
    </source>
</evidence>
<evidence type="ECO:0000255" key="2">
    <source>
        <dbReference type="PROSITE-ProRule" id="PRU00238"/>
    </source>
</evidence>
<proteinExistence type="inferred from homology"/>
<gene>
    <name evidence="1" type="primary">hmp</name>
    <name type="ordered locus">BA_1467</name>
    <name type="ordered locus">GBAA_1467</name>
    <name type="ordered locus">BAS1357</name>
</gene>
<keyword id="KW-0216">Detoxification</keyword>
<keyword id="KW-0274">FAD</keyword>
<keyword id="KW-0285">Flavoprotein</keyword>
<keyword id="KW-0349">Heme</keyword>
<keyword id="KW-0408">Iron</keyword>
<keyword id="KW-0479">Metal-binding</keyword>
<keyword id="KW-0520">NAD</keyword>
<keyword id="KW-0521">NADP</keyword>
<keyword id="KW-0560">Oxidoreductase</keyword>
<keyword id="KW-0561">Oxygen transport</keyword>
<keyword id="KW-1185">Reference proteome</keyword>
<keyword id="KW-0813">Transport</keyword>
<sequence>MLSEKTIEIVKSTVPLLQEKGVEITTRFYEILFSEHPELLNIFNHTNQKKGRQQQALANAVYAAATYIDNLEAIIPVVKQIGHKHRSLGIKAEHYPIVGTCLLRAIKEVAGAPDEVLNAWGEAYGVIADAFISIEAEMYEEAAHKEGGWKDFRNFVVVKKVKESDVITSLYLKPEDGGKVSSFIPGQYVTVQINIEGETYTHNRQYSLSDAPGKEYYRISVKKEKGVDTPDGKVSNYLHDHVKEGDMLPVSAPAGDFVLNMDSTLPVVLISGGVGITPMMSMLNTLIEQDSKRNVCFVHAAINSNTHAMKEHVEAVDNEYEQVKAYTCYSAPTEKDLEMKNFDKEGFVEREWLQTIIPTTEAEFYFCGPVPFMKHINAVLTDLGVKQEHIHYEFFGPAASLQ</sequence>
<organism>
    <name type="scientific">Bacillus anthracis</name>
    <dbReference type="NCBI Taxonomy" id="1392"/>
    <lineage>
        <taxon>Bacteria</taxon>
        <taxon>Bacillati</taxon>
        <taxon>Bacillota</taxon>
        <taxon>Bacilli</taxon>
        <taxon>Bacillales</taxon>
        <taxon>Bacillaceae</taxon>
        <taxon>Bacillus</taxon>
        <taxon>Bacillus cereus group</taxon>
    </lineage>
</organism>
<comment type="function">
    <text evidence="1">Is involved in NO detoxification in an aerobic process, termed nitric oxide dioxygenase (NOD) reaction that utilizes O(2) and NAD(P)H to convert NO to nitrate, which protects the bacterium from various noxious nitrogen compounds. Therefore, plays a central role in the inducible response to nitrosative stress.</text>
</comment>
<comment type="catalytic activity">
    <reaction evidence="1">
        <text>2 nitric oxide + NADPH + 2 O2 = 2 nitrate + NADP(+) + H(+)</text>
        <dbReference type="Rhea" id="RHEA:19465"/>
        <dbReference type="ChEBI" id="CHEBI:15378"/>
        <dbReference type="ChEBI" id="CHEBI:15379"/>
        <dbReference type="ChEBI" id="CHEBI:16480"/>
        <dbReference type="ChEBI" id="CHEBI:17632"/>
        <dbReference type="ChEBI" id="CHEBI:57783"/>
        <dbReference type="ChEBI" id="CHEBI:58349"/>
        <dbReference type="EC" id="1.14.12.17"/>
    </reaction>
</comment>
<comment type="catalytic activity">
    <reaction evidence="1">
        <text>2 nitric oxide + NADH + 2 O2 = 2 nitrate + NAD(+) + H(+)</text>
        <dbReference type="Rhea" id="RHEA:19469"/>
        <dbReference type="ChEBI" id="CHEBI:15378"/>
        <dbReference type="ChEBI" id="CHEBI:15379"/>
        <dbReference type="ChEBI" id="CHEBI:16480"/>
        <dbReference type="ChEBI" id="CHEBI:17632"/>
        <dbReference type="ChEBI" id="CHEBI:57540"/>
        <dbReference type="ChEBI" id="CHEBI:57945"/>
        <dbReference type="EC" id="1.14.12.17"/>
    </reaction>
</comment>
<comment type="cofactor">
    <cofactor evidence="1">
        <name>heme b</name>
        <dbReference type="ChEBI" id="CHEBI:60344"/>
    </cofactor>
    <text evidence="1">Binds 1 heme b (iron(II)-protoporphyrin IX) group per subunit.</text>
</comment>
<comment type="cofactor">
    <cofactor evidence="1">
        <name>FAD</name>
        <dbReference type="ChEBI" id="CHEBI:57692"/>
    </cofactor>
    <text evidence="1">Binds 1 FAD per subunit.</text>
</comment>
<comment type="domain">
    <text>Consists of two distinct domains; an N-terminal heme-containing oxygen-binding domain and a C-terminal reductase domain with binding sites for FAD and NAD(P)H.</text>
</comment>
<comment type="similarity">
    <text evidence="1">Belongs to the globin family. Two-domain flavohemoproteins subfamily.</text>
</comment>
<comment type="similarity">
    <text evidence="1">In the C-terminal section; belongs to the flavoprotein pyridine nucleotide cytochrome reductase family.</text>
</comment>
<dbReference type="EC" id="1.14.12.17" evidence="1"/>
<dbReference type="EMBL" id="AE016879">
    <property type="protein sequence ID" value="AAP25408.1"/>
    <property type="molecule type" value="Genomic_DNA"/>
</dbReference>
<dbReference type="EMBL" id="AE017334">
    <property type="protein sequence ID" value="AAT30564.1"/>
    <property type="molecule type" value="Genomic_DNA"/>
</dbReference>
<dbReference type="EMBL" id="AE017225">
    <property type="protein sequence ID" value="AAT53677.1"/>
    <property type="molecule type" value="Genomic_DNA"/>
</dbReference>
<dbReference type="RefSeq" id="NP_843922.1">
    <property type="nucleotide sequence ID" value="NC_003997.3"/>
</dbReference>
<dbReference type="RefSeq" id="YP_027626.1">
    <property type="nucleotide sequence ID" value="NC_005945.1"/>
</dbReference>
<dbReference type="SMR" id="Q81T23"/>
<dbReference type="STRING" id="261594.GBAA_1467"/>
<dbReference type="DNASU" id="1084422"/>
<dbReference type="GeneID" id="45021446"/>
<dbReference type="KEGG" id="ban:BA_1467"/>
<dbReference type="KEGG" id="bar:GBAA_1467"/>
<dbReference type="KEGG" id="bat:BAS1357"/>
<dbReference type="PATRIC" id="fig|198094.11.peg.1440"/>
<dbReference type="eggNOG" id="COG1017">
    <property type="taxonomic scope" value="Bacteria"/>
</dbReference>
<dbReference type="eggNOG" id="COG1018">
    <property type="taxonomic scope" value="Bacteria"/>
</dbReference>
<dbReference type="HOGENOM" id="CLU_003827_12_0_9"/>
<dbReference type="OMA" id="ADIHYEV"/>
<dbReference type="OrthoDB" id="9801223at2"/>
<dbReference type="Proteomes" id="UP000000427">
    <property type="component" value="Chromosome"/>
</dbReference>
<dbReference type="Proteomes" id="UP000000594">
    <property type="component" value="Chromosome"/>
</dbReference>
<dbReference type="GO" id="GO:0071949">
    <property type="term" value="F:FAD binding"/>
    <property type="evidence" value="ECO:0007669"/>
    <property type="project" value="InterPro"/>
</dbReference>
<dbReference type="GO" id="GO:0020037">
    <property type="term" value="F:heme binding"/>
    <property type="evidence" value="ECO:0007669"/>
    <property type="project" value="InterPro"/>
</dbReference>
<dbReference type="GO" id="GO:0046872">
    <property type="term" value="F:metal ion binding"/>
    <property type="evidence" value="ECO:0007669"/>
    <property type="project" value="UniProtKB-KW"/>
</dbReference>
<dbReference type="GO" id="GO:0008941">
    <property type="term" value="F:nitric oxide dioxygenase NAD(P)H activity"/>
    <property type="evidence" value="ECO:0007669"/>
    <property type="project" value="UniProtKB-UniRule"/>
</dbReference>
<dbReference type="GO" id="GO:0019825">
    <property type="term" value="F:oxygen binding"/>
    <property type="evidence" value="ECO:0007669"/>
    <property type="project" value="InterPro"/>
</dbReference>
<dbReference type="GO" id="GO:0005344">
    <property type="term" value="F:oxygen carrier activity"/>
    <property type="evidence" value="ECO:0007669"/>
    <property type="project" value="UniProtKB-UniRule"/>
</dbReference>
<dbReference type="GO" id="GO:0071500">
    <property type="term" value="P:cellular response to nitrosative stress"/>
    <property type="evidence" value="ECO:0007669"/>
    <property type="project" value="TreeGrafter"/>
</dbReference>
<dbReference type="GO" id="GO:0046210">
    <property type="term" value="P:nitric oxide catabolic process"/>
    <property type="evidence" value="ECO:0007669"/>
    <property type="project" value="TreeGrafter"/>
</dbReference>
<dbReference type="GO" id="GO:0009636">
    <property type="term" value="P:response to toxic substance"/>
    <property type="evidence" value="ECO:0007669"/>
    <property type="project" value="UniProtKB-KW"/>
</dbReference>
<dbReference type="CDD" id="cd06184">
    <property type="entry name" value="flavohem_like_fad_nad_binding"/>
    <property type="match status" value="1"/>
</dbReference>
<dbReference type="CDD" id="cd14777">
    <property type="entry name" value="Yhb1-globin-like"/>
    <property type="match status" value="1"/>
</dbReference>
<dbReference type="FunFam" id="1.10.490.10:FF:000003">
    <property type="entry name" value="Flavohemoprotein"/>
    <property type="match status" value="1"/>
</dbReference>
<dbReference type="FunFam" id="2.40.30.10:FF:000034">
    <property type="entry name" value="Flavohemoprotein"/>
    <property type="match status" value="1"/>
</dbReference>
<dbReference type="FunFam" id="3.40.50.80:FF:000010">
    <property type="entry name" value="Flavohemoprotein"/>
    <property type="match status" value="1"/>
</dbReference>
<dbReference type="Gene3D" id="1.10.490.10">
    <property type="entry name" value="Globins"/>
    <property type="match status" value="1"/>
</dbReference>
<dbReference type="Gene3D" id="3.40.50.80">
    <property type="entry name" value="Nucleotide-binding domain of ferredoxin-NADP reductase (FNR) module"/>
    <property type="match status" value="1"/>
</dbReference>
<dbReference type="Gene3D" id="2.40.30.10">
    <property type="entry name" value="Translation factors"/>
    <property type="match status" value="1"/>
</dbReference>
<dbReference type="HAMAP" id="MF_01252">
    <property type="entry name" value="Hmp"/>
    <property type="match status" value="1"/>
</dbReference>
<dbReference type="InterPro" id="IPR008333">
    <property type="entry name" value="Cbr1-like_FAD-bd_dom"/>
</dbReference>
<dbReference type="InterPro" id="IPR017927">
    <property type="entry name" value="FAD-bd_FR_type"/>
</dbReference>
<dbReference type="InterPro" id="IPR001709">
    <property type="entry name" value="Flavoprot_Pyr_Nucl_cyt_Rdtase"/>
</dbReference>
<dbReference type="InterPro" id="IPR039261">
    <property type="entry name" value="FNR_nucleotide-bd"/>
</dbReference>
<dbReference type="InterPro" id="IPR000971">
    <property type="entry name" value="Globin"/>
</dbReference>
<dbReference type="InterPro" id="IPR009050">
    <property type="entry name" value="Globin-like_sf"/>
</dbReference>
<dbReference type="InterPro" id="IPR012292">
    <property type="entry name" value="Globin/Proto"/>
</dbReference>
<dbReference type="InterPro" id="IPR023950">
    <property type="entry name" value="Hmp"/>
</dbReference>
<dbReference type="InterPro" id="IPR001433">
    <property type="entry name" value="OxRdtase_FAD/NAD-bd"/>
</dbReference>
<dbReference type="InterPro" id="IPR017938">
    <property type="entry name" value="Riboflavin_synthase-like_b-brl"/>
</dbReference>
<dbReference type="NCBIfam" id="NF009805">
    <property type="entry name" value="PRK13289.1"/>
    <property type="match status" value="1"/>
</dbReference>
<dbReference type="PANTHER" id="PTHR43396">
    <property type="entry name" value="FLAVOHEMOPROTEIN"/>
    <property type="match status" value="1"/>
</dbReference>
<dbReference type="PANTHER" id="PTHR43396:SF3">
    <property type="entry name" value="FLAVOHEMOPROTEIN"/>
    <property type="match status" value="1"/>
</dbReference>
<dbReference type="Pfam" id="PF00970">
    <property type="entry name" value="FAD_binding_6"/>
    <property type="match status" value="1"/>
</dbReference>
<dbReference type="Pfam" id="PF00042">
    <property type="entry name" value="Globin"/>
    <property type="match status" value="1"/>
</dbReference>
<dbReference type="Pfam" id="PF00175">
    <property type="entry name" value="NAD_binding_1"/>
    <property type="match status" value="1"/>
</dbReference>
<dbReference type="PRINTS" id="PR00371">
    <property type="entry name" value="FPNCR"/>
</dbReference>
<dbReference type="PRINTS" id="PR00410">
    <property type="entry name" value="PHEHYDRXLASE"/>
</dbReference>
<dbReference type="SUPFAM" id="SSF52343">
    <property type="entry name" value="Ferredoxin reductase-like, C-terminal NADP-linked domain"/>
    <property type="match status" value="1"/>
</dbReference>
<dbReference type="SUPFAM" id="SSF46458">
    <property type="entry name" value="Globin-like"/>
    <property type="match status" value="1"/>
</dbReference>
<dbReference type="SUPFAM" id="SSF63380">
    <property type="entry name" value="Riboflavin synthase domain-like"/>
    <property type="match status" value="1"/>
</dbReference>
<dbReference type="PROSITE" id="PS51384">
    <property type="entry name" value="FAD_FR"/>
    <property type="match status" value="1"/>
</dbReference>
<dbReference type="PROSITE" id="PS01033">
    <property type="entry name" value="GLOBIN"/>
    <property type="match status" value="1"/>
</dbReference>
<name>HMP_BACAN</name>